<protein>
    <recommendedName>
        <fullName>Cuticle protein 7 isoform b</fullName>
    </recommendedName>
    <alternativeName>
        <fullName>LpCP7b</fullName>
    </alternativeName>
</protein>
<keyword id="KW-0193">Cuticle</keyword>
<keyword id="KW-0903">Direct protein sequencing</keyword>
<keyword id="KW-0873">Pyrrolidone carboxylic acid</keyword>
<name>CU7B_LIMPO</name>
<evidence type="ECO:0000269" key="1">
    <source>
    </source>
</evidence>
<evidence type="ECO:0000305" key="2"/>
<organism evidence="2">
    <name type="scientific">Limulus polyphemus</name>
    <name type="common">Atlantic horseshoe crab</name>
    <dbReference type="NCBI Taxonomy" id="6850"/>
    <lineage>
        <taxon>Eukaryota</taxon>
        <taxon>Metazoa</taxon>
        <taxon>Ecdysozoa</taxon>
        <taxon>Arthropoda</taxon>
        <taxon>Chelicerata</taxon>
        <taxon>Merostomata</taxon>
        <taxon>Xiphosura</taxon>
        <taxon>Limulidae</taxon>
        <taxon>Limulus</taxon>
    </lineage>
</organism>
<sequence length="59" mass="6987">QAVRYANGYTYDIETGQVSSPYTGRVYETKGKAPFYGFGFKYPYHYYPGYYHGYPHVFY</sequence>
<accession>P83360</accession>
<dbReference type="Proteomes" id="UP000694941">
    <property type="component" value="Unplaced"/>
</dbReference>
<dbReference type="GO" id="GO:0042302">
    <property type="term" value="F:structural constituent of cuticle"/>
    <property type="evidence" value="ECO:0007669"/>
    <property type="project" value="UniProtKB-KW"/>
</dbReference>
<dbReference type="InterPro" id="IPR012540">
    <property type="entry name" value="Cuticle_2"/>
</dbReference>
<dbReference type="Pfam" id="PF08184">
    <property type="entry name" value="Cuticle_2"/>
    <property type="match status" value="1"/>
</dbReference>
<reference key="1">
    <citation type="journal article" date="2003" name="Comp. Biochem. Physiol.">
        <title>Cuticular proteins from the horseshoe crab, Limulus polyphemus.</title>
        <authorList>
            <person name="Ditzel N."/>
            <person name="Andersen S.O."/>
            <person name="Hoejrup P."/>
        </authorList>
    </citation>
    <scope>PROTEIN SEQUENCE</scope>
    <scope>MASS SPECTROMETRY</scope>
    <scope>PYROGLUTAMATE FORMATION AT GLN-1</scope>
    <source>
        <tissue>Carapace cuticle</tissue>
    </source>
</reference>
<comment type="mass spectrometry" mass="6970.0" method="MALDI" evidence="1"/>
<feature type="chain" id="PRO_0000196174" description="Cuticle protein 7 isoform b">
    <location>
        <begin position="1"/>
        <end position="59"/>
    </location>
</feature>
<feature type="modified residue" description="Pyrrolidone carboxylic acid" evidence="1">
    <location>
        <position position="1"/>
    </location>
</feature>
<proteinExistence type="evidence at protein level"/>